<keyword id="KW-0002">3D-structure</keyword>
<keyword id="KW-0007">Acetylation</keyword>
<keyword id="KW-0041">Annexin</keyword>
<keyword id="KW-0094">Blood coagulation</keyword>
<keyword id="KW-0106">Calcium</keyword>
<keyword id="KW-0111">Calcium/phospholipid-binding</keyword>
<keyword id="KW-0903">Direct protein sequencing</keyword>
<keyword id="KW-0356">Hemostasis</keyword>
<keyword id="KW-1017">Isopeptide bond</keyword>
<keyword id="KW-0597">Phosphoprotein</keyword>
<keyword id="KW-1267">Proteomics identification</keyword>
<keyword id="KW-1185">Reference proteome</keyword>
<keyword id="KW-0677">Repeat</keyword>
<keyword id="KW-0702">S-nitrosylation</keyword>
<keyword id="KW-0832">Ubl conjugation</keyword>
<evidence type="ECO:0000250" key="1"/>
<evidence type="ECO:0000250" key="2">
    <source>
        <dbReference type="UniProtKB" id="P48036"/>
    </source>
</evidence>
<evidence type="ECO:0000255" key="3">
    <source>
        <dbReference type="PROSITE-ProRule" id="PRU01245"/>
    </source>
</evidence>
<evidence type="ECO:0000269" key="4">
    <source>
    </source>
</evidence>
<evidence type="ECO:0000269" key="5">
    <source>
    </source>
</evidence>
<evidence type="ECO:0000269" key="6">
    <source>
    </source>
</evidence>
<evidence type="ECO:0000305" key="7"/>
<evidence type="ECO:0000305" key="8">
    <source>
    </source>
</evidence>
<evidence type="ECO:0007744" key="9">
    <source>
    </source>
</evidence>
<evidence type="ECO:0007744" key="10">
    <source>
    </source>
</evidence>
<evidence type="ECO:0007744" key="11">
    <source>
    </source>
</evidence>
<evidence type="ECO:0007744" key="12">
    <source>
    </source>
</evidence>
<evidence type="ECO:0007744" key="13">
    <source>
    </source>
</evidence>
<evidence type="ECO:0007744" key="14">
    <source>
    </source>
</evidence>
<evidence type="ECO:0007829" key="15">
    <source>
        <dbReference type="PDB" id="1HVD"/>
    </source>
</evidence>
<evidence type="ECO:0007829" key="16">
    <source>
        <dbReference type="PDB" id="8GYC"/>
    </source>
</evidence>
<dbReference type="EMBL" id="M18366">
    <property type="protein sequence ID" value="AAA35570.1"/>
    <property type="molecule type" value="mRNA"/>
</dbReference>
<dbReference type="EMBL" id="D00172">
    <property type="protein sequence ID" value="BAA00122.1"/>
    <property type="molecule type" value="mRNA"/>
</dbReference>
<dbReference type="EMBL" id="X12454">
    <property type="protein sequence ID" value="CAA30985.1"/>
    <property type="molecule type" value="mRNA"/>
</dbReference>
<dbReference type="EMBL" id="J03745">
    <property type="protein sequence ID" value="AAA52386.1"/>
    <property type="molecule type" value="mRNA"/>
</dbReference>
<dbReference type="EMBL" id="M21731">
    <property type="protein sequence ID" value="AAA36166.1"/>
    <property type="molecule type" value="mRNA"/>
</dbReference>
<dbReference type="EMBL" id="M19384">
    <property type="protein sequence ID" value="AAB59545.1"/>
    <property type="molecule type" value="mRNA"/>
</dbReference>
<dbReference type="EMBL" id="U01691">
    <property type="protein sequence ID" value="AAB40047.1"/>
    <property type="molecule type" value="Genomic_DNA"/>
</dbReference>
<dbReference type="EMBL" id="U01681">
    <property type="protein sequence ID" value="AAB40047.1"/>
    <property type="status" value="JOINED"/>
    <property type="molecule type" value="Genomic_DNA"/>
</dbReference>
<dbReference type="EMBL" id="U01682">
    <property type="protein sequence ID" value="AAB40047.1"/>
    <property type="status" value="JOINED"/>
    <property type="molecule type" value="Genomic_DNA"/>
</dbReference>
<dbReference type="EMBL" id="U01683">
    <property type="protein sequence ID" value="AAB40047.1"/>
    <property type="status" value="JOINED"/>
    <property type="molecule type" value="Genomic_DNA"/>
</dbReference>
<dbReference type="EMBL" id="U01685">
    <property type="protein sequence ID" value="AAB40047.1"/>
    <property type="status" value="JOINED"/>
    <property type="molecule type" value="Genomic_DNA"/>
</dbReference>
<dbReference type="EMBL" id="U01686">
    <property type="protein sequence ID" value="AAB40047.1"/>
    <property type="status" value="JOINED"/>
    <property type="molecule type" value="Genomic_DNA"/>
</dbReference>
<dbReference type="EMBL" id="U01687">
    <property type="protein sequence ID" value="AAB40047.1"/>
    <property type="status" value="JOINED"/>
    <property type="molecule type" value="Genomic_DNA"/>
</dbReference>
<dbReference type="EMBL" id="U01689">
    <property type="protein sequence ID" value="AAB40047.1"/>
    <property type="status" value="JOINED"/>
    <property type="molecule type" value="Genomic_DNA"/>
</dbReference>
<dbReference type="EMBL" id="U01690">
    <property type="protein sequence ID" value="AAB40047.1"/>
    <property type="status" value="JOINED"/>
    <property type="molecule type" value="Genomic_DNA"/>
</dbReference>
<dbReference type="EMBL" id="U05770">
    <property type="protein sequence ID" value="AAB60648.1"/>
    <property type="molecule type" value="Genomic_DNA"/>
</dbReference>
<dbReference type="EMBL" id="U05760">
    <property type="protein sequence ID" value="AAB60648.1"/>
    <property type="status" value="JOINED"/>
    <property type="molecule type" value="Genomic_DNA"/>
</dbReference>
<dbReference type="EMBL" id="U05761">
    <property type="protein sequence ID" value="AAB60648.1"/>
    <property type="status" value="JOINED"/>
    <property type="molecule type" value="Genomic_DNA"/>
</dbReference>
<dbReference type="EMBL" id="U05762">
    <property type="protein sequence ID" value="AAB60648.1"/>
    <property type="status" value="JOINED"/>
    <property type="molecule type" value="Genomic_DNA"/>
</dbReference>
<dbReference type="EMBL" id="U05764">
    <property type="protein sequence ID" value="AAB60648.1"/>
    <property type="status" value="JOINED"/>
    <property type="molecule type" value="Genomic_DNA"/>
</dbReference>
<dbReference type="EMBL" id="U05765">
    <property type="protein sequence ID" value="AAB60648.1"/>
    <property type="status" value="JOINED"/>
    <property type="molecule type" value="Genomic_DNA"/>
</dbReference>
<dbReference type="EMBL" id="U05766">
    <property type="protein sequence ID" value="AAB60648.1"/>
    <property type="status" value="JOINED"/>
    <property type="molecule type" value="Genomic_DNA"/>
</dbReference>
<dbReference type="EMBL" id="U05767">
    <property type="protein sequence ID" value="AAB60648.1"/>
    <property type="status" value="JOINED"/>
    <property type="molecule type" value="Genomic_DNA"/>
</dbReference>
<dbReference type="EMBL" id="U05768">
    <property type="protein sequence ID" value="AAB60648.1"/>
    <property type="status" value="JOINED"/>
    <property type="molecule type" value="Genomic_DNA"/>
</dbReference>
<dbReference type="EMBL" id="U05769">
    <property type="protein sequence ID" value="AAB60648.1"/>
    <property type="status" value="JOINED"/>
    <property type="molecule type" value="Genomic_DNA"/>
</dbReference>
<dbReference type="EMBL" id="AK312644">
    <property type="protein sequence ID" value="BAG35528.1"/>
    <property type="molecule type" value="mRNA"/>
</dbReference>
<dbReference type="EMBL" id="CR536522">
    <property type="protein sequence ID" value="CAG38759.1"/>
    <property type="molecule type" value="mRNA"/>
</dbReference>
<dbReference type="EMBL" id="CR541842">
    <property type="protein sequence ID" value="CAG46640.1"/>
    <property type="molecule type" value="mRNA"/>
</dbReference>
<dbReference type="EMBL" id="AC096730">
    <property type="protein sequence ID" value="AAY40954.1"/>
    <property type="molecule type" value="Genomic_DNA"/>
</dbReference>
<dbReference type="EMBL" id="CH471056">
    <property type="protein sequence ID" value="EAX05257.1"/>
    <property type="molecule type" value="Genomic_DNA"/>
</dbReference>
<dbReference type="EMBL" id="CH471056">
    <property type="protein sequence ID" value="EAX05258.1"/>
    <property type="molecule type" value="Genomic_DNA"/>
</dbReference>
<dbReference type="EMBL" id="BC001429">
    <property type="protein sequence ID" value="AAH01429.1"/>
    <property type="molecule type" value="mRNA"/>
</dbReference>
<dbReference type="EMBL" id="BC004993">
    <property type="protein sequence ID" value="AAH04993.1"/>
    <property type="molecule type" value="mRNA"/>
</dbReference>
<dbReference type="EMBL" id="BC012804">
    <property type="protein sequence ID" value="AAH12804.1"/>
    <property type="molecule type" value="mRNA"/>
</dbReference>
<dbReference type="EMBL" id="BC012822">
    <property type="protein sequence ID" value="AAH12822.1"/>
    <property type="molecule type" value="mRNA"/>
</dbReference>
<dbReference type="EMBL" id="BC018671">
    <property type="protein sequence ID" value="AAH18671.1"/>
    <property type="molecule type" value="mRNA"/>
</dbReference>
<dbReference type="CCDS" id="CCDS3720.1"/>
<dbReference type="PIR" id="D29250">
    <property type="entry name" value="AQHUP"/>
</dbReference>
<dbReference type="RefSeq" id="NP_001145.1">
    <property type="nucleotide sequence ID" value="NM_001154.4"/>
</dbReference>
<dbReference type="PDB" id="1ANW">
    <property type="method" value="X-ray"/>
    <property type="resolution" value="2.40 A"/>
    <property type="chains" value="A/B=2-320"/>
</dbReference>
<dbReference type="PDB" id="1ANX">
    <property type="method" value="X-ray"/>
    <property type="resolution" value="1.90 A"/>
    <property type="chains" value="A/B/C=2-320"/>
</dbReference>
<dbReference type="PDB" id="1AVH">
    <property type="method" value="X-ray"/>
    <property type="resolution" value="2.30 A"/>
    <property type="chains" value="A/B=1-320"/>
</dbReference>
<dbReference type="PDB" id="1AVR">
    <property type="method" value="X-ray"/>
    <property type="resolution" value="2.30 A"/>
    <property type="chains" value="A=1-320"/>
</dbReference>
<dbReference type="PDB" id="1HAK">
    <property type="method" value="X-ray"/>
    <property type="resolution" value="3.00 A"/>
    <property type="chains" value="A/B=1-320"/>
</dbReference>
<dbReference type="PDB" id="1HVD">
    <property type="method" value="X-ray"/>
    <property type="resolution" value="2.00 A"/>
    <property type="chains" value="A=2-320"/>
</dbReference>
<dbReference type="PDB" id="1HVE">
    <property type="method" value="X-ray"/>
    <property type="resolution" value="2.30 A"/>
    <property type="chains" value="A=2-320"/>
</dbReference>
<dbReference type="PDB" id="1HVF">
    <property type="method" value="X-ray"/>
    <property type="resolution" value="2.00 A"/>
    <property type="chains" value="A=2-320"/>
</dbReference>
<dbReference type="PDB" id="1HVG">
    <property type="method" value="X-ray"/>
    <property type="resolution" value="3.00 A"/>
    <property type="chains" value="A=2-320"/>
</dbReference>
<dbReference type="PDB" id="1SAV">
    <property type="method" value="X-ray"/>
    <property type="resolution" value="2.50 A"/>
    <property type="chains" value="A=1-320"/>
</dbReference>
<dbReference type="PDB" id="2XO2">
    <property type="method" value="X-ray"/>
    <property type="resolution" value="2.80 A"/>
    <property type="chains" value="A=1-320"/>
</dbReference>
<dbReference type="PDB" id="2XO3">
    <property type="method" value="X-ray"/>
    <property type="resolution" value="2.30 A"/>
    <property type="chains" value="A=1-320"/>
</dbReference>
<dbReference type="PDB" id="6K22">
    <property type="method" value="X-ray"/>
    <property type="resolution" value="2.75 A"/>
    <property type="chains" value="A=2-320"/>
</dbReference>
<dbReference type="PDB" id="6K25">
    <property type="method" value="X-ray"/>
    <property type="resolution" value="2.40 A"/>
    <property type="chains" value="A=2-320"/>
</dbReference>
<dbReference type="PDB" id="8GYC">
    <property type="method" value="X-ray"/>
    <property type="resolution" value="1.80 A"/>
    <property type="chains" value="A/B=2-320"/>
</dbReference>
<dbReference type="PDB" id="8H0J">
    <property type="method" value="X-ray"/>
    <property type="resolution" value="2.23 A"/>
    <property type="chains" value="A=2-320"/>
</dbReference>
<dbReference type="PDB" id="8H9Z">
    <property type="method" value="X-ray"/>
    <property type="resolution" value="1.42 A"/>
    <property type="chains" value="A=2-320"/>
</dbReference>
<dbReference type="PDBsum" id="1ANW"/>
<dbReference type="PDBsum" id="1ANX"/>
<dbReference type="PDBsum" id="1AVH"/>
<dbReference type="PDBsum" id="1AVR"/>
<dbReference type="PDBsum" id="1HAK"/>
<dbReference type="PDBsum" id="1HVD"/>
<dbReference type="PDBsum" id="1HVE"/>
<dbReference type="PDBsum" id="1HVF"/>
<dbReference type="PDBsum" id="1HVG"/>
<dbReference type="PDBsum" id="1SAV"/>
<dbReference type="PDBsum" id="2XO2"/>
<dbReference type="PDBsum" id="2XO3"/>
<dbReference type="PDBsum" id="6K22"/>
<dbReference type="PDBsum" id="6K25"/>
<dbReference type="PDBsum" id="8GYC"/>
<dbReference type="PDBsum" id="8H0J"/>
<dbReference type="PDBsum" id="8H9Z"/>
<dbReference type="SMR" id="P08758"/>
<dbReference type="BioGRID" id="106805">
    <property type="interactions" value="230"/>
</dbReference>
<dbReference type="FunCoup" id="P08758">
    <property type="interactions" value="979"/>
</dbReference>
<dbReference type="IntAct" id="P08758">
    <property type="interactions" value="66"/>
</dbReference>
<dbReference type="MINT" id="P08758"/>
<dbReference type="STRING" id="9606.ENSP00000296511"/>
<dbReference type="DrugBank" id="DB03981">
    <property type="generic name" value="1,4-Dideoxy-5-Dehydro-O2-Sulfo-Glucuronic Acid"/>
</dbReference>
<dbReference type="DrugBank" id="DB03935">
    <property type="generic name" value="1,4-Dideoxy-O2-Sulfo-Glucuronic Acid"/>
</dbReference>
<dbReference type="DrugBank" id="DB09130">
    <property type="generic name" value="Copper"/>
</dbReference>
<dbReference type="DrugBank" id="DB00591">
    <property type="generic name" value="Fluocinolone acetonide"/>
</dbReference>
<dbReference type="DrugBank" id="DB02929">
    <property type="generic name" value="K201 free base"/>
</dbReference>
<dbReference type="DrugBank" id="DB02497">
    <property type="generic name" value="L-Alpha-Glycerophosphorylserine"/>
</dbReference>
<dbReference type="DrugBank" id="DB02846">
    <property type="generic name" value="L-thioproline"/>
</dbReference>
<dbReference type="DrugBank" id="DB03959">
    <property type="generic name" value="N,O6-Disulfo-Glucosamine"/>
</dbReference>
<dbReference type="DrugBank" id="DB03484">
    <property type="generic name" value="sn-glycero-3-phosphoethanolamine"/>
</dbReference>
<dbReference type="TCDB" id="1.A.31.1.7">
    <property type="family name" value="the annexin (annexin) family"/>
</dbReference>
<dbReference type="GlyGen" id="P08758">
    <property type="glycosylation" value="2 sites, 1 O-linked glycan (2 sites)"/>
</dbReference>
<dbReference type="iPTMnet" id="P08758"/>
<dbReference type="MetOSite" id="P08758"/>
<dbReference type="PhosphoSitePlus" id="P08758"/>
<dbReference type="SwissPalm" id="P08758"/>
<dbReference type="BioMuta" id="ANXA5"/>
<dbReference type="DMDM" id="113960"/>
<dbReference type="OGP" id="P08758"/>
<dbReference type="REPRODUCTION-2DPAGE" id="IPI00329801"/>
<dbReference type="REPRODUCTION-2DPAGE" id="P08758"/>
<dbReference type="jPOST" id="P08758"/>
<dbReference type="MassIVE" id="P08758"/>
<dbReference type="PaxDb" id="9606-ENSP00000296511"/>
<dbReference type="PeptideAtlas" id="P08758"/>
<dbReference type="PRIDE" id="P08758"/>
<dbReference type="ProteomicsDB" id="52165"/>
<dbReference type="TopDownProteomics" id="P08758"/>
<dbReference type="Antibodypedia" id="3290">
    <property type="antibodies" value="783 antibodies from 45 providers"/>
</dbReference>
<dbReference type="DNASU" id="308"/>
<dbReference type="Ensembl" id="ENST00000296511.10">
    <property type="protein sequence ID" value="ENSP00000296511.5"/>
    <property type="gene ID" value="ENSG00000164111.15"/>
</dbReference>
<dbReference type="GeneID" id="308"/>
<dbReference type="KEGG" id="hsa:308"/>
<dbReference type="MANE-Select" id="ENST00000296511.10">
    <property type="protein sequence ID" value="ENSP00000296511.5"/>
    <property type="RefSeq nucleotide sequence ID" value="NM_001154.4"/>
    <property type="RefSeq protein sequence ID" value="NP_001145.1"/>
</dbReference>
<dbReference type="AGR" id="HGNC:543"/>
<dbReference type="CTD" id="308"/>
<dbReference type="DisGeNET" id="308"/>
<dbReference type="GeneCards" id="ANXA5"/>
<dbReference type="HGNC" id="HGNC:543">
    <property type="gene designation" value="ANXA5"/>
</dbReference>
<dbReference type="HPA" id="ENSG00000164111">
    <property type="expression patterns" value="Low tissue specificity"/>
</dbReference>
<dbReference type="MalaCards" id="ANXA5"/>
<dbReference type="MIM" id="131230">
    <property type="type" value="gene"/>
</dbReference>
<dbReference type="MIM" id="614391">
    <property type="type" value="phenotype"/>
</dbReference>
<dbReference type="neXtProt" id="NX_P08758"/>
<dbReference type="OpenTargets" id="ENSG00000164111"/>
<dbReference type="PharmGKB" id="PA24833"/>
<dbReference type="VEuPathDB" id="HostDB:ENSG00000164111"/>
<dbReference type="eggNOG" id="KOG0819">
    <property type="taxonomic scope" value="Eukaryota"/>
</dbReference>
<dbReference type="GeneTree" id="ENSGT00940000155988"/>
<dbReference type="HOGENOM" id="CLU_025300_0_0_1"/>
<dbReference type="InParanoid" id="P08758"/>
<dbReference type="OMA" id="LQGNRDP"/>
<dbReference type="OrthoDB" id="37886at2759"/>
<dbReference type="PAN-GO" id="P08758">
    <property type="GO annotations" value="2 GO annotations based on evolutionary models"/>
</dbReference>
<dbReference type="PhylomeDB" id="P08758"/>
<dbReference type="TreeFam" id="TF105452"/>
<dbReference type="PathwayCommons" id="P08758"/>
<dbReference type="Reactome" id="R-HSA-114608">
    <property type="pathway name" value="Platelet degranulation"/>
</dbReference>
<dbReference type="SignaLink" id="P08758"/>
<dbReference type="BioGRID-ORCS" id="308">
    <property type="hits" value="14 hits in 1164 CRISPR screens"/>
</dbReference>
<dbReference type="CD-CODE" id="FB4E32DD">
    <property type="entry name" value="Presynaptic clusters and postsynaptic densities"/>
</dbReference>
<dbReference type="ChiTaRS" id="ANXA5">
    <property type="organism name" value="human"/>
</dbReference>
<dbReference type="EvolutionaryTrace" id="P08758"/>
<dbReference type="GeneWiki" id="Annexin_A5"/>
<dbReference type="GenomeRNAi" id="308"/>
<dbReference type="Pharos" id="P08758">
    <property type="development level" value="Tbio"/>
</dbReference>
<dbReference type="PRO" id="PR:P08758"/>
<dbReference type="Proteomes" id="UP000005640">
    <property type="component" value="Chromosome 4"/>
</dbReference>
<dbReference type="RNAct" id="P08758">
    <property type="molecule type" value="protein"/>
</dbReference>
<dbReference type="Bgee" id="ENSG00000164111">
    <property type="expression patterns" value="Expressed in stromal cell of endometrium and 211 other cell types or tissues"/>
</dbReference>
<dbReference type="ExpressionAtlas" id="P08758">
    <property type="expression patterns" value="baseline and differential"/>
</dbReference>
<dbReference type="GO" id="GO:0062023">
    <property type="term" value="C:collagen-containing extracellular matrix"/>
    <property type="evidence" value="ECO:0007005"/>
    <property type="project" value="BHF-UCL"/>
</dbReference>
<dbReference type="GO" id="GO:0005737">
    <property type="term" value="C:cytoplasm"/>
    <property type="evidence" value="ECO:0000318"/>
    <property type="project" value="GO_Central"/>
</dbReference>
<dbReference type="GO" id="GO:0005829">
    <property type="term" value="C:cytosol"/>
    <property type="evidence" value="ECO:0000304"/>
    <property type="project" value="Reactome"/>
</dbReference>
<dbReference type="GO" id="GO:0072563">
    <property type="term" value="C:endothelial microparticle"/>
    <property type="evidence" value="ECO:0007669"/>
    <property type="project" value="Ensembl"/>
</dbReference>
<dbReference type="GO" id="GO:0009897">
    <property type="term" value="C:external side of plasma membrane"/>
    <property type="evidence" value="ECO:0007669"/>
    <property type="project" value="Ensembl"/>
</dbReference>
<dbReference type="GO" id="GO:0070062">
    <property type="term" value="C:extracellular exosome"/>
    <property type="evidence" value="ECO:0007005"/>
    <property type="project" value="UniProtKB"/>
</dbReference>
<dbReference type="GO" id="GO:0005576">
    <property type="term" value="C:extracellular region"/>
    <property type="evidence" value="ECO:0000304"/>
    <property type="project" value="Reactome"/>
</dbReference>
<dbReference type="GO" id="GO:0005925">
    <property type="term" value="C:focal adhesion"/>
    <property type="evidence" value="ECO:0007005"/>
    <property type="project" value="UniProtKB"/>
</dbReference>
<dbReference type="GO" id="GO:0016020">
    <property type="term" value="C:membrane"/>
    <property type="evidence" value="ECO:0007005"/>
    <property type="project" value="UniProtKB"/>
</dbReference>
<dbReference type="GO" id="GO:0042383">
    <property type="term" value="C:sarcolemma"/>
    <property type="evidence" value="ECO:0000318"/>
    <property type="project" value="GO_Central"/>
</dbReference>
<dbReference type="GO" id="GO:0012506">
    <property type="term" value="C:vesicle membrane"/>
    <property type="evidence" value="ECO:0000318"/>
    <property type="project" value="GO_Central"/>
</dbReference>
<dbReference type="GO" id="GO:0005509">
    <property type="term" value="F:calcium ion binding"/>
    <property type="evidence" value="ECO:0007669"/>
    <property type="project" value="InterPro"/>
</dbReference>
<dbReference type="GO" id="GO:0005544">
    <property type="term" value="F:calcium-dependent phospholipid binding"/>
    <property type="evidence" value="ECO:0000314"/>
    <property type="project" value="UniProtKB"/>
</dbReference>
<dbReference type="GO" id="GO:0001786">
    <property type="term" value="F:phosphatidylserine binding"/>
    <property type="evidence" value="ECO:0000318"/>
    <property type="project" value="GO_Central"/>
</dbReference>
<dbReference type="GO" id="GO:0004859">
    <property type="term" value="F:phospholipase inhibitor activity"/>
    <property type="evidence" value="ECO:0000304"/>
    <property type="project" value="ProtInc"/>
</dbReference>
<dbReference type="GO" id="GO:0005543">
    <property type="term" value="F:phospholipid binding"/>
    <property type="evidence" value="ECO:0000304"/>
    <property type="project" value="ProtInc"/>
</dbReference>
<dbReference type="GO" id="GO:0007596">
    <property type="term" value="P:blood coagulation"/>
    <property type="evidence" value="ECO:0007669"/>
    <property type="project" value="UniProtKB-KW"/>
</dbReference>
<dbReference type="GO" id="GO:0043066">
    <property type="term" value="P:negative regulation of apoptotic process"/>
    <property type="evidence" value="ECO:0000304"/>
    <property type="project" value="UniProtKB"/>
</dbReference>
<dbReference type="GO" id="GO:0050819">
    <property type="term" value="P:negative regulation of coagulation"/>
    <property type="evidence" value="ECO:0007669"/>
    <property type="project" value="InterPro"/>
</dbReference>
<dbReference type="GO" id="GO:0007165">
    <property type="term" value="P:signal transduction"/>
    <property type="evidence" value="ECO:0000304"/>
    <property type="project" value="UniProtKB"/>
</dbReference>
<dbReference type="FunFam" id="1.10.220.10:FF:000002">
    <property type="entry name" value="Annexin"/>
    <property type="match status" value="1"/>
</dbReference>
<dbReference type="FunFam" id="1.10.220.10:FF:000003">
    <property type="entry name" value="Annexin"/>
    <property type="match status" value="1"/>
</dbReference>
<dbReference type="FunFam" id="1.10.220.10:FF:000004">
    <property type="entry name" value="Annexin"/>
    <property type="match status" value="1"/>
</dbReference>
<dbReference type="FunFam" id="1.10.220.10:FF:000022">
    <property type="entry name" value="Annexin A5"/>
    <property type="match status" value="1"/>
</dbReference>
<dbReference type="Gene3D" id="1.10.220.10">
    <property type="entry name" value="Annexin"/>
    <property type="match status" value="4"/>
</dbReference>
<dbReference type="InterPro" id="IPR001464">
    <property type="entry name" value="Annexin"/>
</dbReference>
<dbReference type="InterPro" id="IPR018502">
    <property type="entry name" value="Annexin_repeat"/>
</dbReference>
<dbReference type="InterPro" id="IPR018252">
    <property type="entry name" value="Annexin_repeat_CS"/>
</dbReference>
<dbReference type="InterPro" id="IPR037104">
    <property type="entry name" value="Annexin_sf"/>
</dbReference>
<dbReference type="InterPro" id="IPR002392">
    <property type="entry name" value="ANX5"/>
</dbReference>
<dbReference type="PANTHER" id="PTHR10502">
    <property type="entry name" value="ANNEXIN"/>
    <property type="match status" value="1"/>
</dbReference>
<dbReference type="PANTHER" id="PTHR10502:SF26">
    <property type="entry name" value="ANNEXIN A5"/>
    <property type="match status" value="1"/>
</dbReference>
<dbReference type="Pfam" id="PF00191">
    <property type="entry name" value="Annexin"/>
    <property type="match status" value="4"/>
</dbReference>
<dbReference type="PRINTS" id="PR00196">
    <property type="entry name" value="ANNEXIN"/>
</dbReference>
<dbReference type="PRINTS" id="PR00201">
    <property type="entry name" value="ANNEXINV"/>
</dbReference>
<dbReference type="SMART" id="SM00335">
    <property type="entry name" value="ANX"/>
    <property type="match status" value="4"/>
</dbReference>
<dbReference type="SUPFAM" id="SSF47874">
    <property type="entry name" value="Annexin"/>
    <property type="match status" value="1"/>
</dbReference>
<dbReference type="PROSITE" id="PS00223">
    <property type="entry name" value="ANNEXIN_1"/>
    <property type="match status" value="4"/>
</dbReference>
<dbReference type="PROSITE" id="PS51897">
    <property type="entry name" value="ANNEXIN_2"/>
    <property type="match status" value="4"/>
</dbReference>
<proteinExistence type="evidence at protein level"/>
<feature type="initiator methionine" description="Removed" evidence="5 10">
    <location>
        <position position="1"/>
    </location>
</feature>
<feature type="chain" id="PRO_0000067487" description="Annexin A5">
    <location>
        <begin position="2"/>
        <end position="320"/>
    </location>
</feature>
<feature type="repeat" description="Annexin 1" evidence="3">
    <location>
        <begin position="15"/>
        <end position="86"/>
    </location>
</feature>
<feature type="repeat" description="Annexin 2" evidence="3">
    <location>
        <begin position="87"/>
        <end position="158"/>
    </location>
</feature>
<feature type="repeat" description="Annexin 3" evidence="3">
    <location>
        <begin position="170"/>
        <end position="242"/>
    </location>
</feature>
<feature type="repeat" description="Annexin 4" evidence="3">
    <location>
        <begin position="246"/>
        <end position="317"/>
    </location>
</feature>
<feature type="short sequence motif" description="[IL]-x-C-x-x-[DE] motif" evidence="8">
    <location>
        <begin position="314"/>
        <end position="319"/>
    </location>
</feature>
<feature type="modified residue" description="N-acetylalanine" evidence="10">
    <location>
        <position position="2"/>
    </location>
</feature>
<feature type="modified residue" description="Phosphoserine" evidence="2">
    <location>
        <position position="37"/>
    </location>
</feature>
<feature type="modified residue" description="N6-acetyllysine" evidence="11">
    <location>
        <position position="70"/>
    </location>
</feature>
<feature type="modified residue" description="N6-acetyllysine" evidence="11">
    <location>
        <position position="76"/>
    </location>
</feature>
<feature type="modified residue" description="N6-acetyllysine" evidence="11">
    <location>
        <position position="79"/>
    </location>
</feature>
<feature type="modified residue" description="N6-acetyllysine" evidence="11">
    <location>
        <position position="97"/>
    </location>
</feature>
<feature type="modified residue" description="N6-acetyllysine" evidence="9">
    <location>
        <position position="101"/>
    </location>
</feature>
<feature type="modified residue" description="N6-succinyllysine" evidence="2">
    <location>
        <position position="290"/>
    </location>
</feature>
<feature type="cross-link" description="Glycyl lysine isopeptide (Lys-Gly) (interchain with G-Cter in SUMO1); alternate" evidence="12">
    <location>
        <position position="29"/>
    </location>
</feature>
<feature type="cross-link" description="Glycyl lysine isopeptide (Lys-Gly) (interchain with G-Cter in SUMO2); alternate" evidence="13 14">
    <location>
        <position position="29"/>
    </location>
</feature>
<feature type="sequence conflict" description="In Ref. 10; CAG38759." evidence="7" ref="10">
    <original>S</original>
    <variation>L</variation>
    <location>
        <position position="135"/>
    </location>
</feature>
<feature type="sequence conflict" description="In Ref. 13; AAH18671." evidence="7" ref="13">
    <original>I</original>
    <variation>T</variation>
    <location>
        <position position="279"/>
    </location>
</feature>
<feature type="helix" evidence="16">
    <location>
        <begin position="17"/>
        <end position="28"/>
    </location>
</feature>
<feature type="strand" evidence="16">
    <location>
        <begin position="29"/>
        <end position="31"/>
    </location>
</feature>
<feature type="helix" evidence="16">
    <location>
        <begin position="35"/>
        <end position="44"/>
    </location>
</feature>
<feature type="helix" evidence="16">
    <location>
        <begin position="47"/>
        <end position="61"/>
    </location>
</feature>
<feature type="helix" evidence="16">
    <location>
        <begin position="65"/>
        <end position="72"/>
    </location>
</feature>
<feature type="helix" evidence="16">
    <location>
        <begin position="75"/>
        <end position="85"/>
    </location>
</feature>
<feature type="helix" evidence="16">
    <location>
        <begin position="88"/>
        <end position="99"/>
    </location>
</feature>
<feature type="helix" evidence="16">
    <location>
        <begin position="102"/>
        <end position="104"/>
    </location>
</feature>
<feature type="helix" evidence="16">
    <location>
        <begin position="107"/>
        <end position="116"/>
    </location>
</feature>
<feature type="helix" evidence="16">
    <location>
        <begin position="119"/>
        <end position="133"/>
    </location>
</feature>
<feature type="helix" evidence="16">
    <location>
        <begin position="137"/>
        <end position="144"/>
    </location>
</feature>
<feature type="helix" evidence="16">
    <location>
        <begin position="147"/>
        <end position="157"/>
    </location>
</feature>
<feature type="helix" evidence="16">
    <location>
        <begin position="169"/>
        <end position="184"/>
    </location>
</feature>
<feature type="turn" evidence="16">
    <location>
        <begin position="185"/>
        <end position="187"/>
    </location>
</feature>
<feature type="helix" evidence="16">
    <location>
        <begin position="191"/>
        <end position="200"/>
    </location>
</feature>
<feature type="helix" evidence="16">
    <location>
        <begin position="203"/>
        <end position="217"/>
    </location>
</feature>
<feature type="helix" evidence="16">
    <location>
        <begin position="221"/>
        <end position="224"/>
    </location>
</feature>
<feature type="strand" evidence="15">
    <location>
        <begin position="228"/>
        <end position="230"/>
    </location>
</feature>
<feature type="helix" evidence="16">
    <location>
        <begin position="232"/>
        <end position="245"/>
    </location>
</feature>
<feature type="helix" evidence="16">
    <location>
        <begin position="247"/>
        <end position="259"/>
    </location>
</feature>
<feature type="strand" evidence="16">
    <location>
        <begin position="260"/>
        <end position="263"/>
    </location>
</feature>
<feature type="helix" evidence="16">
    <location>
        <begin position="266"/>
        <end position="275"/>
    </location>
</feature>
<feature type="turn" evidence="16">
    <location>
        <begin position="276"/>
        <end position="280"/>
    </location>
</feature>
<feature type="helix" evidence="16">
    <location>
        <begin position="281"/>
        <end position="292"/>
    </location>
</feature>
<feature type="helix" evidence="16">
    <location>
        <begin position="296"/>
        <end position="303"/>
    </location>
</feature>
<feature type="helix" evidence="16">
    <location>
        <begin position="306"/>
        <end position="316"/>
    </location>
</feature>
<comment type="function">
    <text>This protein is an anticoagulant protein that acts as an indirect inhibitor of the thromboplastin-specific complex, which is involved in the blood coagulation cascade.</text>
</comment>
<comment type="subunit">
    <text evidence="1 6">Monomer. Binds ATRX and EIF5B (By similarity). Interacts with hepatitis B virus (HBV).</text>
</comment>
<comment type="interaction">
    <interactant intactId="EBI-296601">
        <id>P08758</id>
    </interactant>
    <interactant intactId="EBI-19954058">
        <id>O15499</id>
        <label>GSC2</label>
    </interactant>
    <organismsDiffer>false</organismsDiffer>
    <experiments>3</experiments>
</comment>
<comment type="interaction">
    <interactant intactId="EBI-296601">
        <id>P08758</id>
    </interactant>
    <interactant intactId="EBI-352682">
        <id>P04792</id>
        <label>HSPB1</label>
    </interactant>
    <organismsDiffer>false</organismsDiffer>
    <experiments>3</experiments>
</comment>
<comment type="interaction">
    <interactant intactId="EBI-296601">
        <id>P08758</id>
    </interactant>
    <interactant intactId="EBI-748974">
        <id>Q96CV9</id>
        <label>OPTN</label>
    </interactant>
    <organismsDiffer>false</organismsDiffer>
    <experiments>3</experiments>
</comment>
<comment type="interaction">
    <interactant intactId="EBI-296601">
        <id>P08758</id>
    </interactant>
    <interactant intactId="EBI-717399">
        <id>Q9BSI4</id>
        <label>TINF2</label>
    </interactant>
    <organismsDiffer>false</organismsDiffer>
    <experiments>2</experiments>
</comment>
<comment type="interaction">
    <interactant intactId="EBI-296601">
        <id>P08758</id>
    </interactant>
    <interactant intactId="EBI-720609">
        <id>O76024</id>
        <label>WFS1</label>
    </interactant>
    <organismsDiffer>false</organismsDiffer>
    <experiments>3</experiments>
</comment>
<comment type="domain">
    <text evidence="8">The [IL]-x-C-x-x-[DE] motif is a proposed target motif for cysteine S-nitrosylation mediated by the iNOS-S100A8/A9 transnitrosylase complex.</text>
</comment>
<comment type="domain">
    <text>A pair of annexin repeats may form one binding site for calcium and phospholipid.</text>
</comment>
<comment type="PTM">
    <text evidence="8">S-nitrosylation is induced by interferon-gamma and oxidatively-modified low-densitity lipoprotein (LDL(ox)) possibly implicating the iNOS-S100A8/9 transnitrosylase complex.</text>
</comment>
<comment type="disease" evidence="4">
    <disease id="DI-03352">
        <name>Pregnancy loss, recurrent, 3</name>
        <acronym>RPRGL3</acronym>
        <description>A common complication of pregnancy, resulting in spontaneous abortion before the fetus has reached viability. The term includes all miscarriages from the time of conception until 24 weeks of gestation. Recurrent pregnancy loss is defined as 3 or more consecutive spontaneous abortions.</description>
        <dbReference type="MIM" id="614391"/>
    </disease>
    <text>Disease susceptibility is associated with variants affecting the gene represented in this entry.</text>
</comment>
<comment type="similarity">
    <text evidence="3 7">Belongs to the annexin family.</text>
</comment>
<accession>P08758</accession>
<accession>D3DNW7</accession>
<accession>Q6FHB3</accession>
<accession>Q6FI16</accession>
<accession>Q8WV69</accession>
<accession>Q9UDH9</accession>
<gene>
    <name type="primary">ANXA5</name>
    <name type="synonym">ANX5</name>
    <name type="synonym">ENX2</name>
    <name type="synonym">PP4</name>
</gene>
<sequence length="320" mass="35937">MAQVLRGTVTDFPGFDERADAETLRKAMKGLGTDEESILTLLTSRSNAQRQEISAAFKTLFGRDLLDDLKSELTGKFEKLIVALMKPSRLYDAYELKHALKGAGTNEKVLTEIIASRTPEELRAIKQVYEEEYGSSLEDDVVGDTSGYYQRMLVVLLQANRDPDAGIDEAQVEQDAQALFQAGELKWGTDEEKFITIFGTRSVSHLRKVFDKYMTISGFQIEETIDRETSGNLEQLLLAVVKSIRSIPAYLAETLYYAMKGAGTDDHTLIRVMVSRSEIDLFNIRKEFRKNFATSLYSMIKGDTSGDYKKALLLLCGEDD</sequence>
<protein>
    <recommendedName>
        <fullName>Annexin A5</fullName>
    </recommendedName>
    <alternativeName>
        <fullName>Anchorin CII</fullName>
    </alternativeName>
    <alternativeName>
        <fullName>Annexin V</fullName>
    </alternativeName>
    <alternativeName>
        <fullName>Annexin-5</fullName>
    </alternativeName>
    <alternativeName>
        <fullName>Calphobindin I</fullName>
        <shortName>CPB-I</shortName>
    </alternativeName>
    <alternativeName>
        <fullName>Endonexin II</fullName>
    </alternativeName>
    <alternativeName>
        <fullName>Lipocortin V</fullName>
    </alternativeName>
    <alternativeName>
        <fullName>Placental anticoagulant protein 4</fullName>
        <shortName>PP4</shortName>
    </alternativeName>
    <alternativeName>
        <fullName>Placental anticoagulant protein I</fullName>
        <shortName>PAP-I</shortName>
    </alternativeName>
    <alternativeName>
        <fullName>Thromboplastin inhibitor</fullName>
    </alternativeName>
    <alternativeName>
        <fullName>Vascular anticoagulant-alpha</fullName>
        <shortName>VAC-alpha</shortName>
    </alternativeName>
</protein>
<organism>
    <name type="scientific">Homo sapiens</name>
    <name type="common">Human</name>
    <dbReference type="NCBI Taxonomy" id="9606"/>
    <lineage>
        <taxon>Eukaryota</taxon>
        <taxon>Metazoa</taxon>
        <taxon>Chordata</taxon>
        <taxon>Craniata</taxon>
        <taxon>Vertebrata</taxon>
        <taxon>Euteleostomi</taxon>
        <taxon>Mammalia</taxon>
        <taxon>Eutheria</taxon>
        <taxon>Euarchontoglires</taxon>
        <taxon>Primates</taxon>
        <taxon>Haplorrhini</taxon>
        <taxon>Catarrhini</taxon>
        <taxon>Hominidae</taxon>
        <taxon>Homo</taxon>
    </lineage>
</organism>
<name>ANXA5_HUMAN</name>
<reference key="1">
    <citation type="journal article" date="1987" name="Biochemistry">
        <title>Primary structure of human placental anticoagulant protein.</title>
        <authorList>
            <person name="Funakoshi T."/>
            <person name="Hendrickson L.E."/>
            <person name="McMullen B.A."/>
            <person name="Fujikawa K."/>
        </authorList>
    </citation>
    <scope>NUCLEOTIDE SEQUENCE [MRNA]</scope>
</reference>
<reference key="2">
    <citation type="journal article" date="1987" name="J. Biochem.">
        <title>Structure and expression of cDNA for an inhibitor of blood coagulation isolated from human placenta: a new lipocortin-like protein.</title>
        <authorList>
            <person name="Iwasaki A."/>
            <person name="Suda M."/>
            <person name="Nakao H."/>
            <person name="Nagoya T."/>
            <person name="Saino Y."/>
            <person name="Arai K."/>
            <person name="Mizoguchi T."/>
            <person name="Sato F."/>
            <person name="Yoshizaki H."/>
            <person name="Hirata M."/>
            <person name="Miyata T."/>
            <person name="Shidara Y."/>
            <person name="Murata M."/>
            <person name="Maki M."/>
        </authorList>
    </citation>
    <scope>NUCLEOTIDE SEQUENCE [MRNA]</scope>
    <scope>PROTEIN SEQUENCE OF 2-320</scope>
</reference>
<reference key="3">
    <citation type="journal article" date="1988" name="Eur. J. Biochem.">
        <title>Cloning and expression of cDNA for human vascular anticoagulant, a Ca2+-dependent phospholipid-binding protein.</title>
        <authorList>
            <person name="Maurer-Fogy I."/>
            <person name="Reutelingsperger C.P.M."/>
            <person name="Pieters J."/>
            <person name="Bodo G."/>
            <person name="Stratowa C."/>
            <person name="Hauptmann R."/>
        </authorList>
    </citation>
    <scope>NUCLEOTIDE SEQUENCE [MRNA]</scope>
    <scope>PARTIAL PROTEIN SEQUENCE</scope>
</reference>
<reference key="4">
    <citation type="journal article" date="1988" name="J. Biol. Chem.">
        <title>Cloning and expression of cDNA for human endonexin II, a Ca2+ and phospholipid binding protein.</title>
        <authorList>
            <person name="Kaplan R."/>
            <person name="Jaye M."/>
            <person name="Burgess W.H."/>
            <person name="Schlaepfer D.D."/>
            <person name="Haigler H.T."/>
        </authorList>
    </citation>
    <scope>NUCLEOTIDE SEQUENCE [MRNA]</scope>
</reference>
<reference key="5">
    <citation type="journal article" date="1988" name="J. Biol. Chem.">
        <title>Five distinct calcium and phospholipid binding proteins share homology with lipocortin I.</title>
        <authorList>
            <person name="Pepinsky R.B."/>
            <person name="Tizard R."/>
            <person name="Mattaliano R.J."/>
            <person name="Sinclair L.K."/>
            <person name="Miller G.T."/>
            <person name="Browning J.L."/>
            <person name="Chow E.P."/>
            <person name="Burne C."/>
            <person name="Huang K.-S."/>
            <person name="Pratt D."/>
            <person name="Wachter L."/>
            <person name="Hession C."/>
            <person name="Frey A.Z."/>
            <person name="Wallner B.P."/>
        </authorList>
    </citation>
    <scope>NUCLEOTIDE SEQUENCE [MRNA]</scope>
</reference>
<reference key="6">
    <citation type="journal article" date="1988" name="Proc. Natl. Acad. Sci. U.S.A.">
        <title>Characterization of cDNA encoding human placental anticoagulant protein (PP4): homology with the lipocortin family.</title>
        <authorList>
            <person name="Grundmann U."/>
            <person name="Abel K.-J."/>
            <person name="Bohn H."/>
            <person name="Loebermann H."/>
            <person name="Lottspeich F."/>
            <person name="Kuepper H."/>
        </authorList>
    </citation>
    <scope>NUCLEOTIDE SEQUENCE [MRNA]</scope>
</reference>
<reference key="7">
    <citation type="journal article" date="1994" name="Gene">
        <title>The gene encoding human annexin V has a TATA-less promoter with a high G+C content.</title>
        <authorList>
            <person name="Fernandez M.-P."/>
            <person name="Morgan R.O."/>
            <person name="Fernandez M.R."/>
            <person name="Carcedo M.-T."/>
        </authorList>
    </citation>
    <scope>NUCLEOTIDE SEQUENCE [GENOMIC DNA]</scope>
    <source>
        <tissue>Lung</tissue>
    </source>
</reference>
<reference key="8">
    <citation type="journal article" date="1994" name="Genomics">
        <title>Organization of the human annexin V (ANX5) gene.</title>
        <authorList>
            <person name="Cookson B.T."/>
            <person name="Engelhardt S."/>
            <person name="Smith C."/>
            <person name="Bamford H.A."/>
            <person name="Prochazka M."/>
            <person name="Tait J.F."/>
        </authorList>
    </citation>
    <scope>NUCLEOTIDE SEQUENCE [GENOMIC DNA]</scope>
</reference>
<reference key="9">
    <citation type="journal article" date="2004" name="Nat. Genet.">
        <title>Complete sequencing and characterization of 21,243 full-length human cDNAs.</title>
        <authorList>
            <person name="Ota T."/>
            <person name="Suzuki Y."/>
            <person name="Nishikawa T."/>
            <person name="Otsuki T."/>
            <person name="Sugiyama T."/>
            <person name="Irie R."/>
            <person name="Wakamatsu A."/>
            <person name="Hayashi K."/>
            <person name="Sato H."/>
            <person name="Nagai K."/>
            <person name="Kimura K."/>
            <person name="Makita H."/>
            <person name="Sekine M."/>
            <person name="Obayashi M."/>
            <person name="Nishi T."/>
            <person name="Shibahara T."/>
            <person name="Tanaka T."/>
            <person name="Ishii S."/>
            <person name="Yamamoto J."/>
            <person name="Saito K."/>
            <person name="Kawai Y."/>
            <person name="Isono Y."/>
            <person name="Nakamura Y."/>
            <person name="Nagahari K."/>
            <person name="Murakami K."/>
            <person name="Yasuda T."/>
            <person name="Iwayanagi T."/>
            <person name="Wagatsuma M."/>
            <person name="Shiratori A."/>
            <person name="Sudo H."/>
            <person name="Hosoiri T."/>
            <person name="Kaku Y."/>
            <person name="Kodaira H."/>
            <person name="Kondo H."/>
            <person name="Sugawara M."/>
            <person name="Takahashi M."/>
            <person name="Kanda K."/>
            <person name="Yokoi T."/>
            <person name="Furuya T."/>
            <person name="Kikkawa E."/>
            <person name="Omura Y."/>
            <person name="Abe K."/>
            <person name="Kamihara K."/>
            <person name="Katsuta N."/>
            <person name="Sato K."/>
            <person name="Tanikawa M."/>
            <person name="Yamazaki M."/>
            <person name="Ninomiya K."/>
            <person name="Ishibashi T."/>
            <person name="Yamashita H."/>
            <person name="Murakawa K."/>
            <person name="Fujimori K."/>
            <person name="Tanai H."/>
            <person name="Kimata M."/>
            <person name="Watanabe M."/>
            <person name="Hiraoka S."/>
            <person name="Chiba Y."/>
            <person name="Ishida S."/>
            <person name="Ono Y."/>
            <person name="Takiguchi S."/>
            <person name="Watanabe S."/>
            <person name="Yosida M."/>
            <person name="Hotuta T."/>
            <person name="Kusano J."/>
            <person name="Kanehori K."/>
            <person name="Takahashi-Fujii A."/>
            <person name="Hara H."/>
            <person name="Tanase T.-O."/>
            <person name="Nomura Y."/>
            <person name="Togiya S."/>
            <person name="Komai F."/>
            <person name="Hara R."/>
            <person name="Takeuchi K."/>
            <person name="Arita M."/>
            <person name="Imose N."/>
            <person name="Musashino K."/>
            <person name="Yuuki H."/>
            <person name="Oshima A."/>
            <person name="Sasaki N."/>
            <person name="Aotsuka S."/>
            <person name="Yoshikawa Y."/>
            <person name="Matsunawa H."/>
            <person name="Ichihara T."/>
            <person name="Shiohata N."/>
            <person name="Sano S."/>
            <person name="Moriya S."/>
            <person name="Momiyama H."/>
            <person name="Satoh N."/>
            <person name="Takami S."/>
            <person name="Terashima Y."/>
            <person name="Suzuki O."/>
            <person name="Nakagawa S."/>
            <person name="Senoh A."/>
            <person name="Mizoguchi H."/>
            <person name="Goto Y."/>
            <person name="Shimizu F."/>
            <person name="Wakebe H."/>
            <person name="Hishigaki H."/>
            <person name="Watanabe T."/>
            <person name="Sugiyama A."/>
            <person name="Takemoto M."/>
            <person name="Kawakami B."/>
            <person name="Yamazaki M."/>
            <person name="Watanabe K."/>
            <person name="Kumagai A."/>
            <person name="Itakura S."/>
            <person name="Fukuzumi Y."/>
            <person name="Fujimori Y."/>
            <person name="Komiyama M."/>
            <person name="Tashiro H."/>
            <person name="Tanigami A."/>
            <person name="Fujiwara T."/>
            <person name="Ono T."/>
            <person name="Yamada K."/>
            <person name="Fujii Y."/>
            <person name="Ozaki K."/>
            <person name="Hirao M."/>
            <person name="Ohmori Y."/>
            <person name="Kawabata A."/>
            <person name="Hikiji T."/>
            <person name="Kobatake N."/>
            <person name="Inagaki H."/>
            <person name="Ikema Y."/>
            <person name="Okamoto S."/>
            <person name="Okitani R."/>
            <person name="Kawakami T."/>
            <person name="Noguchi S."/>
            <person name="Itoh T."/>
            <person name="Shigeta K."/>
            <person name="Senba T."/>
            <person name="Matsumura K."/>
            <person name="Nakajima Y."/>
            <person name="Mizuno T."/>
            <person name="Morinaga M."/>
            <person name="Sasaki M."/>
            <person name="Togashi T."/>
            <person name="Oyama M."/>
            <person name="Hata H."/>
            <person name="Watanabe M."/>
            <person name="Komatsu T."/>
            <person name="Mizushima-Sugano J."/>
            <person name="Satoh T."/>
            <person name="Shirai Y."/>
            <person name="Takahashi Y."/>
            <person name="Nakagawa K."/>
            <person name="Okumura K."/>
            <person name="Nagase T."/>
            <person name="Nomura N."/>
            <person name="Kikuchi H."/>
            <person name="Masuho Y."/>
            <person name="Yamashita R."/>
            <person name="Nakai K."/>
            <person name="Yada T."/>
            <person name="Nakamura Y."/>
            <person name="Ohara O."/>
            <person name="Isogai T."/>
            <person name="Sugano S."/>
        </authorList>
    </citation>
    <scope>NUCLEOTIDE SEQUENCE [LARGE SCALE MRNA]</scope>
    <source>
        <tissue>Neuroblastoma</tissue>
    </source>
</reference>
<reference key="10">
    <citation type="submission" date="2004-06" db="EMBL/GenBank/DDBJ databases">
        <title>Cloning of human full open reading frames in Gateway(TM) system entry vector (pDONR201).</title>
        <authorList>
            <person name="Halleck A."/>
            <person name="Ebert L."/>
            <person name="Mkoundinya M."/>
            <person name="Schick M."/>
            <person name="Eisenstein S."/>
            <person name="Neubert P."/>
            <person name="Kstrang K."/>
            <person name="Schatten R."/>
            <person name="Shen B."/>
            <person name="Henze S."/>
            <person name="Mar W."/>
            <person name="Korn B."/>
            <person name="Zuo D."/>
            <person name="Hu Y."/>
            <person name="LaBaer J."/>
        </authorList>
    </citation>
    <scope>NUCLEOTIDE SEQUENCE [LARGE SCALE MRNA]</scope>
</reference>
<reference key="11">
    <citation type="journal article" date="2005" name="Nature">
        <title>Generation and annotation of the DNA sequences of human chromosomes 2 and 4.</title>
        <authorList>
            <person name="Hillier L.W."/>
            <person name="Graves T.A."/>
            <person name="Fulton R.S."/>
            <person name="Fulton L.A."/>
            <person name="Pepin K.H."/>
            <person name="Minx P."/>
            <person name="Wagner-McPherson C."/>
            <person name="Layman D."/>
            <person name="Wylie K."/>
            <person name="Sekhon M."/>
            <person name="Becker M.C."/>
            <person name="Fewell G.A."/>
            <person name="Delehaunty K.D."/>
            <person name="Miner T.L."/>
            <person name="Nash W.E."/>
            <person name="Kremitzki C."/>
            <person name="Oddy L."/>
            <person name="Du H."/>
            <person name="Sun H."/>
            <person name="Bradshaw-Cordum H."/>
            <person name="Ali J."/>
            <person name="Carter J."/>
            <person name="Cordes M."/>
            <person name="Harris A."/>
            <person name="Isak A."/>
            <person name="van Brunt A."/>
            <person name="Nguyen C."/>
            <person name="Du F."/>
            <person name="Courtney L."/>
            <person name="Kalicki J."/>
            <person name="Ozersky P."/>
            <person name="Abbott S."/>
            <person name="Armstrong J."/>
            <person name="Belter E.A."/>
            <person name="Caruso L."/>
            <person name="Cedroni M."/>
            <person name="Cotton M."/>
            <person name="Davidson T."/>
            <person name="Desai A."/>
            <person name="Elliott G."/>
            <person name="Erb T."/>
            <person name="Fronick C."/>
            <person name="Gaige T."/>
            <person name="Haakenson W."/>
            <person name="Haglund K."/>
            <person name="Holmes A."/>
            <person name="Harkins R."/>
            <person name="Kim K."/>
            <person name="Kruchowski S.S."/>
            <person name="Strong C.M."/>
            <person name="Grewal N."/>
            <person name="Goyea E."/>
            <person name="Hou S."/>
            <person name="Levy A."/>
            <person name="Martinka S."/>
            <person name="Mead K."/>
            <person name="McLellan M.D."/>
            <person name="Meyer R."/>
            <person name="Randall-Maher J."/>
            <person name="Tomlinson C."/>
            <person name="Dauphin-Kohlberg S."/>
            <person name="Kozlowicz-Reilly A."/>
            <person name="Shah N."/>
            <person name="Swearengen-Shahid S."/>
            <person name="Snider J."/>
            <person name="Strong J.T."/>
            <person name="Thompson J."/>
            <person name="Yoakum M."/>
            <person name="Leonard S."/>
            <person name="Pearman C."/>
            <person name="Trani L."/>
            <person name="Radionenko M."/>
            <person name="Waligorski J.E."/>
            <person name="Wang C."/>
            <person name="Rock S.M."/>
            <person name="Tin-Wollam A.-M."/>
            <person name="Maupin R."/>
            <person name="Latreille P."/>
            <person name="Wendl M.C."/>
            <person name="Yang S.-P."/>
            <person name="Pohl C."/>
            <person name="Wallis J.W."/>
            <person name="Spieth J."/>
            <person name="Bieri T.A."/>
            <person name="Berkowicz N."/>
            <person name="Nelson J.O."/>
            <person name="Osborne J."/>
            <person name="Ding L."/>
            <person name="Meyer R."/>
            <person name="Sabo A."/>
            <person name="Shotland Y."/>
            <person name="Sinha P."/>
            <person name="Wohldmann P.E."/>
            <person name="Cook L.L."/>
            <person name="Hickenbotham M.T."/>
            <person name="Eldred J."/>
            <person name="Williams D."/>
            <person name="Jones T.A."/>
            <person name="She X."/>
            <person name="Ciccarelli F.D."/>
            <person name="Izaurralde E."/>
            <person name="Taylor J."/>
            <person name="Schmutz J."/>
            <person name="Myers R.M."/>
            <person name="Cox D.R."/>
            <person name="Huang X."/>
            <person name="McPherson J.D."/>
            <person name="Mardis E.R."/>
            <person name="Clifton S.W."/>
            <person name="Warren W.C."/>
            <person name="Chinwalla A.T."/>
            <person name="Eddy S.R."/>
            <person name="Marra M.A."/>
            <person name="Ovcharenko I."/>
            <person name="Furey T.S."/>
            <person name="Miller W."/>
            <person name="Eichler E.E."/>
            <person name="Bork P."/>
            <person name="Suyama M."/>
            <person name="Torrents D."/>
            <person name="Waterston R.H."/>
            <person name="Wilson R.K."/>
        </authorList>
    </citation>
    <scope>NUCLEOTIDE SEQUENCE [LARGE SCALE GENOMIC DNA]</scope>
</reference>
<reference key="12">
    <citation type="submission" date="2005-09" db="EMBL/GenBank/DDBJ databases">
        <authorList>
            <person name="Mural R.J."/>
            <person name="Istrail S."/>
            <person name="Sutton G.G."/>
            <person name="Florea L."/>
            <person name="Halpern A.L."/>
            <person name="Mobarry C.M."/>
            <person name="Lippert R."/>
            <person name="Walenz B."/>
            <person name="Shatkay H."/>
            <person name="Dew I."/>
            <person name="Miller J.R."/>
            <person name="Flanigan M.J."/>
            <person name="Edwards N.J."/>
            <person name="Bolanos R."/>
            <person name="Fasulo D."/>
            <person name="Halldorsson B.V."/>
            <person name="Hannenhalli S."/>
            <person name="Turner R."/>
            <person name="Yooseph S."/>
            <person name="Lu F."/>
            <person name="Nusskern D.R."/>
            <person name="Shue B.C."/>
            <person name="Zheng X.H."/>
            <person name="Zhong F."/>
            <person name="Delcher A.L."/>
            <person name="Huson D.H."/>
            <person name="Kravitz S.A."/>
            <person name="Mouchard L."/>
            <person name="Reinert K."/>
            <person name="Remington K.A."/>
            <person name="Clark A.G."/>
            <person name="Waterman M.S."/>
            <person name="Eichler E.E."/>
            <person name="Adams M.D."/>
            <person name="Hunkapiller M.W."/>
            <person name="Myers E.W."/>
            <person name="Venter J.C."/>
        </authorList>
    </citation>
    <scope>NUCLEOTIDE SEQUENCE [LARGE SCALE GENOMIC DNA]</scope>
</reference>
<reference key="13">
    <citation type="journal article" date="2004" name="Genome Res.">
        <title>The status, quality, and expansion of the NIH full-length cDNA project: the Mammalian Gene Collection (MGC).</title>
        <authorList>
            <consortium name="The MGC Project Team"/>
        </authorList>
    </citation>
    <scope>NUCLEOTIDE SEQUENCE [LARGE SCALE MRNA]</scope>
    <source>
        <tissue>Muscle</tissue>
        <tissue>Ovary</tissue>
        <tissue>Skin</tissue>
    </source>
</reference>
<reference key="14">
    <citation type="journal article" date="1989" name="Biochem. J.">
        <title>A 32 kDa lipocortin from human mononuclear cells appears to be identical with the placental inhibitor of blood coagulation.</title>
        <authorList>
            <person name="Rothhut R."/>
            <person name="Comera C."/>
            <person name="Cortial S."/>
            <person name="Haumont P.-Y."/>
            <person name="Diep Le K.H."/>
            <person name="Cavadore J.-C."/>
            <person name="Conard J."/>
            <person name="Russo-Marie F."/>
            <person name="Lederer F."/>
        </authorList>
    </citation>
    <scope>PARTIAL PROTEIN SEQUENCE</scope>
</reference>
<reference key="15">
    <citation type="submission" date="2005-01" db="UniProtKB">
        <authorList>
            <person name="Quadroni M."/>
            <person name="Potts A."/>
            <person name="Barblan J."/>
            <person name="Bienvenut W.V."/>
        </authorList>
    </citation>
    <scope>PROTEIN SEQUENCE OF 7-18; 30-45; 187-201 AND 277-286</scope>
    <scope>IDENTIFICATION BY MASS SPECTROMETRY</scope>
    <source>
        <tissue>Melanoma</tissue>
    </source>
</reference>
<reference key="16">
    <citation type="journal article" date="1993" name="Virology">
        <title>Endonexin II, present on human liver plasma membranes, is a specific binding protein of small hepatitis B virus (HBV) envelope protein.</title>
        <authorList>
            <person name="Hertogs K."/>
            <person name="Leenders W.P."/>
            <person name="Depla E."/>
            <person name="De Bruin W.C."/>
            <person name="Meheus L."/>
            <person name="Raymackers J."/>
            <person name="Moshage H."/>
            <person name="Yap S.H."/>
        </authorList>
    </citation>
    <scope>PROTEIN SEQUENCE OF 21-31; 93-108; 176-188 AND 304-319</scope>
    <scope>INTERACTION WITH HBV</scope>
</reference>
<reference key="17">
    <citation type="journal article" date="1987" name="Proc. Natl. Acad. Sci. U.S.A.">
        <title>Structural and functional characterization of endonexin II, a calcium- and phospholipid-binding protein.</title>
        <authorList>
            <person name="Schlaepfer D.D."/>
            <person name="Mehlman T."/>
            <person name="Burgess W.H."/>
            <person name="Haigler H.T."/>
        </authorList>
    </citation>
    <scope>PROTEIN SEQUENCE OF 86-131; 259-297 AND 300-320</scope>
</reference>
<reference key="18">
    <citation type="journal article" date="1988" name="J. Biol. Chem.">
        <title>Sedimentation equilibrium analysis of five lipocortin-related phospholipase A2 inhibitors from human placenta. Evidence against a mechanistically relevant association between enzyme and inhibitor.</title>
        <authorList>
            <person name="Ahn N.G."/>
            <person name="Teller D.C."/>
            <person name="Bienkowski M.J."/>
            <person name="McMullen B.A."/>
            <person name="Lipkin E.W."/>
            <person name="de Haen C."/>
        </authorList>
    </citation>
    <scope>PROTEIN SEQUENCE OF 85-93</scope>
    <source>
        <tissue>Placenta</tissue>
    </source>
</reference>
<reference key="19">
    <citation type="journal article" date="2004" name="Biochem. J.">
        <title>Vectorial proteomics reveal targeting, phosphorylation and specific fragmentation of polymerase I and transcript release factor (PTRF) at the surface of caveolae in human adipocytes.</title>
        <authorList>
            <person name="Aboulaich N."/>
            <person name="Vainonen J.P."/>
            <person name="Stralfors P."/>
            <person name="Vener A.V."/>
        </authorList>
    </citation>
    <scope>PROTEIN SEQUENCE OF 152-161 AND 246-260</scope>
    <source>
        <tissue>Adipocyte</tissue>
    </source>
</reference>
<reference key="20">
    <citation type="journal article" date="2006" name="Mol. Cell">
        <title>Substrate and functional diversity of lysine acetylation revealed by a proteomics survey.</title>
        <authorList>
            <person name="Kim S.C."/>
            <person name="Sprung R."/>
            <person name="Chen Y."/>
            <person name="Xu Y."/>
            <person name="Ball H."/>
            <person name="Pei J."/>
            <person name="Cheng T."/>
            <person name="Kho Y."/>
            <person name="Xiao H."/>
            <person name="Xiao L."/>
            <person name="Grishin N.V."/>
            <person name="White M."/>
            <person name="Yang X.-J."/>
            <person name="Zhao Y."/>
        </authorList>
    </citation>
    <scope>ACETYLATION [LARGE SCALE ANALYSIS] AT LYS-101</scope>
    <scope>IDENTIFICATION BY MASS SPECTROMETRY [LARGE SCALE ANALYSIS]</scope>
    <source>
        <tissue>Cervix carcinoma</tissue>
    </source>
</reference>
<reference key="21">
    <citation type="journal article" date="2007" name="Hum. Mol. Genet.">
        <title>A common haplotype of the annexin A5 (ANXA5) gene promoter is associated with recurrent pregnancy loss.</title>
        <authorList>
            <person name="Bogdanova N."/>
            <person name="Horst J."/>
            <person name="Chlystun M."/>
            <person name="Croucher P.J."/>
            <person name="Nebel A."/>
            <person name="Bohring A."/>
            <person name="Todorova A."/>
            <person name="Schreiber S."/>
            <person name="Gerke V."/>
            <person name="Krawczak M."/>
            <person name="Markoff A."/>
        </authorList>
    </citation>
    <scope>INVOLVEMENT IN RPRGL3</scope>
</reference>
<reference key="22">
    <citation type="journal article" date="2009" name="Anal. Chem.">
        <title>Lys-N and trypsin cover complementary parts of the phosphoproteome in a refined SCX-based approach.</title>
        <authorList>
            <person name="Gauci S."/>
            <person name="Helbig A.O."/>
            <person name="Slijper M."/>
            <person name="Krijgsveld J."/>
            <person name="Heck A.J."/>
            <person name="Mohammed S."/>
        </authorList>
    </citation>
    <scope>ACETYLATION [LARGE SCALE ANALYSIS] AT ALA-2</scope>
    <scope>CLEAVAGE OF INITIATOR METHIONINE [LARGE SCALE ANALYSIS]</scope>
    <scope>IDENTIFICATION BY MASS SPECTROMETRY [LARGE SCALE ANALYSIS]</scope>
</reference>
<reference key="23">
    <citation type="journal article" date="2009" name="Science">
        <title>Lysine acetylation targets protein complexes and co-regulates major cellular functions.</title>
        <authorList>
            <person name="Choudhary C."/>
            <person name="Kumar C."/>
            <person name="Gnad F."/>
            <person name="Nielsen M.L."/>
            <person name="Rehman M."/>
            <person name="Walther T.C."/>
            <person name="Olsen J.V."/>
            <person name="Mann M."/>
        </authorList>
    </citation>
    <scope>ACETYLATION [LARGE SCALE ANALYSIS] AT LYS-70; LYS-76; LYS-79 AND LYS-97</scope>
    <scope>IDENTIFICATION BY MASS SPECTROMETRY [LARGE SCALE ANALYSIS]</scope>
</reference>
<reference key="24">
    <citation type="journal article" date="2011" name="BMC Syst. Biol.">
        <title>Initial characterization of the human central proteome.</title>
        <authorList>
            <person name="Burkard T.R."/>
            <person name="Planyavsky M."/>
            <person name="Kaupe I."/>
            <person name="Breitwieser F.P."/>
            <person name="Buerckstuemmer T."/>
            <person name="Bennett K.L."/>
            <person name="Superti-Furga G."/>
            <person name="Colinge J."/>
        </authorList>
    </citation>
    <scope>IDENTIFICATION BY MASS SPECTROMETRY [LARGE SCALE ANALYSIS]</scope>
</reference>
<reference key="25">
    <citation type="journal article" date="2014" name="Cell">
        <title>Target-selective protein S-nitrosylation by sequence motif recognition.</title>
        <authorList>
            <person name="Jia J."/>
            <person name="Arif A."/>
            <person name="Terenzi F."/>
            <person name="Willard B."/>
            <person name="Plow E.F."/>
            <person name="Hazen S.L."/>
            <person name="Fox P.L."/>
        </authorList>
    </citation>
    <scope>S-NITROSYLATION</scope>
    <scope>DOMAIN</scope>
</reference>
<reference key="26">
    <citation type="journal article" date="2014" name="J. Proteomics">
        <title>An enzyme assisted RP-RPLC approach for in-depth analysis of human liver phosphoproteome.</title>
        <authorList>
            <person name="Bian Y."/>
            <person name="Song C."/>
            <person name="Cheng K."/>
            <person name="Dong M."/>
            <person name="Wang F."/>
            <person name="Huang J."/>
            <person name="Sun D."/>
            <person name="Wang L."/>
            <person name="Ye M."/>
            <person name="Zou H."/>
        </authorList>
    </citation>
    <scope>IDENTIFICATION BY MASS SPECTROMETRY [LARGE SCALE ANALYSIS]</scope>
    <source>
        <tissue>Liver</tissue>
    </source>
</reference>
<reference key="27">
    <citation type="journal article" date="2014" name="Proc. Natl. Acad. Sci. U.S.A.">
        <title>Mapping of SUMO sites and analysis of SUMOylation changes induced by external stimuli.</title>
        <authorList>
            <person name="Impens F."/>
            <person name="Radoshevich L."/>
            <person name="Cossart P."/>
            <person name="Ribet D."/>
        </authorList>
    </citation>
    <scope>SUMOYLATION [LARGE SCALE ANALYSIS] AT LYS-29</scope>
    <scope>IDENTIFICATION BY MASS SPECTROMETRY [LARGE SCALE ANALYSIS]</scope>
</reference>
<reference key="28">
    <citation type="journal article" date="2015" name="Cell Rep.">
        <title>SUMO-2 orchestrates chromatin modifiers in response to DNA damage.</title>
        <authorList>
            <person name="Hendriks I.A."/>
            <person name="Treffers L.W."/>
            <person name="Verlaan-de Vries M."/>
            <person name="Olsen J.V."/>
            <person name="Vertegaal A.C."/>
        </authorList>
    </citation>
    <scope>SUMOYLATION [LARGE SCALE ANALYSIS] AT LYS-29</scope>
    <scope>IDENTIFICATION BY MASS SPECTROMETRY [LARGE SCALE ANALYSIS]</scope>
</reference>
<reference key="29">
    <citation type="journal article" date="2015" name="Proteomics">
        <title>N-terminome analysis of the human mitochondrial proteome.</title>
        <authorList>
            <person name="Vaca Jacome A.S."/>
            <person name="Rabilloud T."/>
            <person name="Schaeffer-Reiss C."/>
            <person name="Rompais M."/>
            <person name="Ayoub D."/>
            <person name="Lane L."/>
            <person name="Bairoch A."/>
            <person name="Van Dorsselaer A."/>
            <person name="Carapito C."/>
        </authorList>
    </citation>
    <scope>IDENTIFICATION BY MASS SPECTROMETRY [LARGE SCALE ANALYSIS]</scope>
</reference>
<reference key="30">
    <citation type="journal article" date="2017" name="Nat. Struct. Mol. Biol.">
        <title>Site-specific mapping of the human SUMO proteome reveals co-modification with phosphorylation.</title>
        <authorList>
            <person name="Hendriks I.A."/>
            <person name="Lyon D."/>
            <person name="Young C."/>
            <person name="Jensen L.J."/>
            <person name="Vertegaal A.C."/>
            <person name="Nielsen M.L."/>
        </authorList>
    </citation>
    <scope>SUMOYLATION [LARGE SCALE ANALYSIS] AT LYS-29</scope>
    <scope>IDENTIFICATION BY MASS SPECTROMETRY [LARGE SCALE ANALYSIS]</scope>
</reference>
<reference key="31">
    <citation type="journal article" date="1990" name="EMBO J.">
        <title>The crystal and molecular structure of human annexin V, an anticoagulant protein that binds to calcium and membranes.</title>
        <authorList>
            <person name="Huber R."/>
            <person name="Roemisch J."/>
            <person name="Paques E.-P."/>
        </authorList>
    </citation>
    <scope>X-RAY CRYSTALLOGRAPHY (2.5 ANGSTROMS)</scope>
</reference>
<reference key="32">
    <citation type="journal article" date="1990" name="FEBS Lett.">
        <title>The calcium binding sites in human annexin V by crystal structure analysis at 2.0-A resolution. Implications for membrane binding and calcium channel activity.</title>
        <authorList>
            <person name="Huber R."/>
            <person name="Schneider M."/>
            <person name="Mayr I."/>
            <person name="Roemisch J."/>
            <person name="Paques E.-P."/>
        </authorList>
    </citation>
    <scope>X-RAY CRYSTALLOGRAPHY (2.0 ANGSTROMS)</scope>
</reference>
<reference key="33">
    <citation type="journal article" date="1992" name="J. Mol. Biol.">
        <title>Crystal and molecular structure of human annexin V after refinement. Implications for structure, membrane binding and ion channel formation of the annexin family of proteins.</title>
        <authorList>
            <person name="Huber R."/>
            <person name="Berendes R."/>
            <person name="Burger A."/>
            <person name="Schneider M."/>
            <person name="Karshikov A."/>
            <person name="Luecke H."/>
            <person name="Roemisch J."/>
            <person name="Paques E.-P."/>
        </authorList>
    </citation>
    <scope>X-RAY CRYSTALLOGRAPHY (2.0 ANGSTROMS)</scope>
</reference>
<reference key="34">
    <citation type="journal article" date="1997" name="J. Mol. Biol.">
        <title>Crystal structure of annexin V with its ligand K-201 as a calcium channel activity inhibitor.</title>
        <authorList>
            <person name="Kaneko N."/>
            <person name="Ago H."/>
            <person name="Matsuda R."/>
            <person name="Inagaki E."/>
            <person name="Miyano M."/>
        </authorList>
    </citation>
    <scope>X-RAY CRYSTALLOGRAPHY (3.0 ANGSTROMS)</scope>
</reference>
<reference key="35">
    <citation type="journal article" date="1998" name="Proc. Natl. Acad. Sci. U.S.A.">
        <title>Residue-specific bioincorporation of non-natural, biologically active amino acids into proteins as possible drug carriers: structure and stability of the per-thiaproline mutant of annexin V.</title>
        <authorList>
            <person name="Budisa N."/>
            <person name="Minks C."/>
            <person name="Medrano F.J."/>
            <person name="Lutz J."/>
            <person name="Huber R."/>
            <person name="Moroder L."/>
        </authorList>
    </citation>
    <scope>X-RAY CRYSTALLOGRAPHY (2.3 ANGSTROMS)</scope>
</reference>